<accession>A0PPJ3</accession>
<proteinExistence type="inferred from homology"/>
<organism>
    <name type="scientific">Mycobacterium ulcerans (strain Agy99)</name>
    <dbReference type="NCBI Taxonomy" id="362242"/>
    <lineage>
        <taxon>Bacteria</taxon>
        <taxon>Bacillati</taxon>
        <taxon>Actinomycetota</taxon>
        <taxon>Actinomycetes</taxon>
        <taxon>Mycobacteriales</taxon>
        <taxon>Mycobacteriaceae</taxon>
        <taxon>Mycobacterium</taxon>
        <taxon>Mycobacterium ulcerans group</taxon>
    </lineage>
</organism>
<evidence type="ECO:0000255" key="1">
    <source>
        <dbReference type="HAMAP-Rule" id="MF_01215"/>
    </source>
</evidence>
<keyword id="KW-0210">Decarboxylase</keyword>
<keyword id="KW-0456">Lyase</keyword>
<keyword id="KW-0665">Pyrimidine biosynthesis</keyword>
<feature type="chain" id="PRO_1000066480" description="Orotidine 5'-phosphate decarboxylase">
    <location>
        <begin position="1"/>
        <end position="278"/>
    </location>
</feature>
<feature type="active site" description="Proton donor" evidence="1">
    <location>
        <position position="95"/>
    </location>
</feature>
<gene>
    <name evidence="1" type="primary">pyrF</name>
    <name type="ordered locus">MUL_1785</name>
</gene>
<name>PYRF_MYCUA</name>
<dbReference type="EC" id="4.1.1.23" evidence="1"/>
<dbReference type="EMBL" id="CP000325">
    <property type="protein sequence ID" value="ABL04262.1"/>
    <property type="molecule type" value="Genomic_DNA"/>
</dbReference>
<dbReference type="RefSeq" id="WP_011739882.1">
    <property type="nucleotide sequence ID" value="NC_008611.1"/>
</dbReference>
<dbReference type="SMR" id="A0PPJ3"/>
<dbReference type="KEGG" id="mul:MUL_1785"/>
<dbReference type="eggNOG" id="COG0284">
    <property type="taxonomic scope" value="Bacteria"/>
</dbReference>
<dbReference type="HOGENOM" id="CLU_060704_0_0_11"/>
<dbReference type="UniPathway" id="UPA00070">
    <property type="reaction ID" value="UER00120"/>
</dbReference>
<dbReference type="Proteomes" id="UP000000765">
    <property type="component" value="Chromosome"/>
</dbReference>
<dbReference type="GO" id="GO:0004590">
    <property type="term" value="F:orotidine-5'-phosphate decarboxylase activity"/>
    <property type="evidence" value="ECO:0007669"/>
    <property type="project" value="UniProtKB-UniRule"/>
</dbReference>
<dbReference type="GO" id="GO:0006207">
    <property type="term" value="P:'de novo' pyrimidine nucleobase biosynthetic process"/>
    <property type="evidence" value="ECO:0007669"/>
    <property type="project" value="InterPro"/>
</dbReference>
<dbReference type="GO" id="GO:0044205">
    <property type="term" value="P:'de novo' UMP biosynthetic process"/>
    <property type="evidence" value="ECO:0007669"/>
    <property type="project" value="UniProtKB-UniRule"/>
</dbReference>
<dbReference type="CDD" id="cd04725">
    <property type="entry name" value="OMP_decarboxylase_like"/>
    <property type="match status" value="1"/>
</dbReference>
<dbReference type="Gene3D" id="3.20.20.70">
    <property type="entry name" value="Aldolase class I"/>
    <property type="match status" value="1"/>
</dbReference>
<dbReference type="HAMAP" id="MF_01215">
    <property type="entry name" value="OMPdecase_type2"/>
    <property type="match status" value="1"/>
</dbReference>
<dbReference type="InterPro" id="IPR013785">
    <property type="entry name" value="Aldolase_TIM"/>
</dbReference>
<dbReference type="InterPro" id="IPR018089">
    <property type="entry name" value="OMPdecase_AS"/>
</dbReference>
<dbReference type="InterPro" id="IPR011995">
    <property type="entry name" value="OMPdecase_type-2"/>
</dbReference>
<dbReference type="InterPro" id="IPR001754">
    <property type="entry name" value="OMPdeCOase_dom"/>
</dbReference>
<dbReference type="InterPro" id="IPR011060">
    <property type="entry name" value="RibuloseP-bd_barrel"/>
</dbReference>
<dbReference type="NCBIfam" id="TIGR02127">
    <property type="entry name" value="pyrF_sub2"/>
    <property type="match status" value="1"/>
</dbReference>
<dbReference type="PANTHER" id="PTHR43375">
    <property type="entry name" value="OROTIDINE 5'-PHOSPHATE DECARBOXYLASE"/>
    <property type="match status" value="1"/>
</dbReference>
<dbReference type="PANTHER" id="PTHR43375:SF1">
    <property type="entry name" value="OROTIDINE 5'-PHOSPHATE DECARBOXYLASE"/>
    <property type="match status" value="1"/>
</dbReference>
<dbReference type="Pfam" id="PF00215">
    <property type="entry name" value="OMPdecase"/>
    <property type="match status" value="1"/>
</dbReference>
<dbReference type="SMART" id="SM00934">
    <property type="entry name" value="OMPdecase"/>
    <property type="match status" value="1"/>
</dbReference>
<dbReference type="SUPFAM" id="SSF51366">
    <property type="entry name" value="Ribulose-phoshate binding barrel"/>
    <property type="match status" value="1"/>
</dbReference>
<dbReference type="PROSITE" id="PS00156">
    <property type="entry name" value="OMPDECASE"/>
    <property type="match status" value="1"/>
</dbReference>
<comment type="catalytic activity">
    <reaction evidence="1">
        <text>orotidine 5'-phosphate + H(+) = UMP + CO2</text>
        <dbReference type="Rhea" id="RHEA:11596"/>
        <dbReference type="ChEBI" id="CHEBI:15378"/>
        <dbReference type="ChEBI" id="CHEBI:16526"/>
        <dbReference type="ChEBI" id="CHEBI:57538"/>
        <dbReference type="ChEBI" id="CHEBI:57865"/>
        <dbReference type="EC" id="4.1.1.23"/>
    </reaction>
</comment>
<comment type="pathway">
    <text evidence="1">Pyrimidine metabolism; UMP biosynthesis via de novo pathway; UMP from orotate: step 2/2.</text>
</comment>
<comment type="similarity">
    <text evidence="1">Belongs to the OMP decarboxylase family. Type 2 subfamily.</text>
</comment>
<protein>
    <recommendedName>
        <fullName evidence="1">Orotidine 5'-phosphate decarboxylase</fullName>
        <ecNumber evidence="1">4.1.1.23</ecNumber>
    </recommendedName>
    <alternativeName>
        <fullName evidence="1">OMP decarboxylase</fullName>
        <shortName evidence="1">OMPDCase</shortName>
        <shortName evidence="1">OMPdecase</shortName>
    </alternativeName>
</protein>
<reference key="1">
    <citation type="journal article" date="2007" name="Genome Res.">
        <title>Reductive evolution and niche adaptation inferred from the genome of Mycobacterium ulcerans, the causative agent of Buruli ulcer.</title>
        <authorList>
            <person name="Stinear T.P."/>
            <person name="Seemann T."/>
            <person name="Pidot S."/>
            <person name="Frigui W."/>
            <person name="Reysset G."/>
            <person name="Garnier T."/>
            <person name="Meurice G."/>
            <person name="Simon D."/>
            <person name="Bouchier C."/>
            <person name="Ma L."/>
            <person name="Tichit M."/>
            <person name="Porter J.L."/>
            <person name="Ryan J."/>
            <person name="Johnson P.D.R."/>
            <person name="Davies J.K."/>
            <person name="Jenkin G.A."/>
            <person name="Small P.L.C."/>
            <person name="Jones L.M."/>
            <person name="Tekaia F."/>
            <person name="Laval F."/>
            <person name="Daffe M."/>
            <person name="Parkhill J."/>
            <person name="Cole S.T."/>
        </authorList>
    </citation>
    <scope>NUCLEOTIDE SEQUENCE [LARGE SCALE GENOMIC DNA]</scope>
    <source>
        <strain>Agy99</strain>
    </source>
</reference>
<sequence>MTGFGARLAEAKAHRGPLCLGIDPHPELLRAWDLPATADGLAAFCDICVAAFAGFAVVKPQVAFFEAYGAAGFAVLEGTMAALRANGVLVLADAKRGDIGSTMAAYAAAWAGDSPLAADAVTVSPFLGFGSLRPLLEVATANDRGVFVLAATSNPEGATIQRADADGRTVAQLIVDQVGLFNSEVGEVTGSEPGSVGVVVGATVLNPPDVSGLGGPVLVPGVGVQGGRPEALGGLGGAAPQQLLPAVSREVLRAGPSISEVRAAAERMLDSVAYLSAV</sequence>